<comment type="function">
    <text evidence="1">Cleaves proteins, imported into the mitochondrion, to their mature size. While most mitochondrial precursor proteins are processed to the mature form in one step by mitochondrial processing peptidase (MPP), the sequential cleavage by MIP of an octapeptide after initial processing by MPP is a required step for a subgroup of nuclear-encoded precursor proteins destined for the matrix or the inner membrane (By similarity).</text>
</comment>
<comment type="catalytic activity">
    <reaction>
        <text>Release of an N-terminal octapeptide as second stage of processing of some proteins imported into the mitochondrion.</text>
        <dbReference type="EC" id="3.4.24.59"/>
    </reaction>
</comment>
<comment type="cofactor">
    <cofactor evidence="1">
        <name>Zn(2+)</name>
        <dbReference type="ChEBI" id="CHEBI:29105"/>
    </cofactor>
    <text evidence="1">Binds 1 zinc ion.</text>
</comment>
<comment type="subcellular location">
    <subcellularLocation>
        <location evidence="1">Mitochondrion matrix</location>
    </subcellularLocation>
</comment>
<comment type="similarity">
    <text evidence="4">Belongs to the peptidase M3 family.</text>
</comment>
<gene>
    <name type="primary">OCT1</name>
    <name type="synonym">alpha-fg</name>
    <name type="synonym">MIP</name>
    <name type="ORF">LACBIDRAFT_181082</name>
</gene>
<dbReference type="EC" id="3.4.24.59"/>
<dbReference type="EMBL" id="DS547091">
    <property type="protein sequence ID" value="EDR15793.1"/>
    <property type="molecule type" value="Genomic_DNA"/>
</dbReference>
<dbReference type="RefSeq" id="XP_001874001.1">
    <property type="nucleotide sequence ID" value="XM_001873966.1"/>
</dbReference>
<dbReference type="SMR" id="B0CRC2"/>
<dbReference type="FunCoup" id="B0CRC2">
    <property type="interactions" value="337"/>
</dbReference>
<dbReference type="STRING" id="486041.B0CRC2"/>
<dbReference type="GeneID" id="6069018"/>
<dbReference type="KEGG" id="lbc:LACBIDRAFT_181082"/>
<dbReference type="HOGENOM" id="CLU_001805_0_0_1"/>
<dbReference type="InParanoid" id="B0CRC2"/>
<dbReference type="OrthoDB" id="17530at2759"/>
<dbReference type="Proteomes" id="UP000001194">
    <property type="component" value="Unassembled WGS sequence"/>
</dbReference>
<dbReference type="GO" id="GO:0005759">
    <property type="term" value="C:mitochondrial matrix"/>
    <property type="evidence" value="ECO:0007669"/>
    <property type="project" value="UniProtKB-SubCell"/>
</dbReference>
<dbReference type="GO" id="GO:0046872">
    <property type="term" value="F:metal ion binding"/>
    <property type="evidence" value="ECO:0007669"/>
    <property type="project" value="UniProtKB-KW"/>
</dbReference>
<dbReference type="GO" id="GO:0004222">
    <property type="term" value="F:metalloendopeptidase activity"/>
    <property type="evidence" value="ECO:0007669"/>
    <property type="project" value="UniProtKB-EC"/>
</dbReference>
<dbReference type="GO" id="GO:0006518">
    <property type="term" value="P:peptide metabolic process"/>
    <property type="evidence" value="ECO:0007669"/>
    <property type="project" value="TreeGrafter"/>
</dbReference>
<dbReference type="GO" id="GO:0006627">
    <property type="term" value="P:protein processing involved in protein targeting to mitochondrion"/>
    <property type="evidence" value="ECO:0007669"/>
    <property type="project" value="TreeGrafter"/>
</dbReference>
<dbReference type="CDD" id="cd06457">
    <property type="entry name" value="M3A_MIP"/>
    <property type="match status" value="1"/>
</dbReference>
<dbReference type="FunFam" id="3.40.390.10:FF:000055">
    <property type="entry name" value="Related to mitochondrial intermediate peptidase"/>
    <property type="match status" value="1"/>
</dbReference>
<dbReference type="Gene3D" id="3.40.390.10">
    <property type="entry name" value="Collagenase (Catalytic Domain)"/>
    <property type="match status" value="1"/>
</dbReference>
<dbReference type="Gene3D" id="1.10.1370.10">
    <property type="entry name" value="Neurolysin, domain 3"/>
    <property type="match status" value="2"/>
</dbReference>
<dbReference type="InterPro" id="IPR033851">
    <property type="entry name" value="M3A_MIP"/>
</dbReference>
<dbReference type="InterPro" id="IPR024079">
    <property type="entry name" value="MetalloPept_cat_dom_sf"/>
</dbReference>
<dbReference type="InterPro" id="IPR024077">
    <property type="entry name" value="Neurolysin/TOP_dom2"/>
</dbReference>
<dbReference type="InterPro" id="IPR045090">
    <property type="entry name" value="Pept_M3A_M3B"/>
</dbReference>
<dbReference type="InterPro" id="IPR001567">
    <property type="entry name" value="Pept_M3A_M3B_dom"/>
</dbReference>
<dbReference type="PANTHER" id="PTHR11804:SF79">
    <property type="entry name" value="MITOCHONDRIAL INTERMEDIATE PEPTIDASE"/>
    <property type="match status" value="1"/>
</dbReference>
<dbReference type="PANTHER" id="PTHR11804">
    <property type="entry name" value="PROTEASE M3 THIMET OLIGOPEPTIDASE-RELATED"/>
    <property type="match status" value="1"/>
</dbReference>
<dbReference type="Pfam" id="PF01432">
    <property type="entry name" value="Peptidase_M3"/>
    <property type="match status" value="1"/>
</dbReference>
<dbReference type="SUPFAM" id="SSF55486">
    <property type="entry name" value="Metalloproteases ('zincins'), catalytic domain"/>
    <property type="match status" value="1"/>
</dbReference>
<dbReference type="PROSITE" id="PS00142">
    <property type="entry name" value="ZINC_PROTEASE"/>
    <property type="match status" value="1"/>
</dbReference>
<organism>
    <name type="scientific">Laccaria bicolor (strain S238N-H82 / ATCC MYA-4686)</name>
    <name type="common">Bicoloured deceiver</name>
    <name type="synonym">Laccaria laccata var. bicolor</name>
    <dbReference type="NCBI Taxonomy" id="486041"/>
    <lineage>
        <taxon>Eukaryota</taxon>
        <taxon>Fungi</taxon>
        <taxon>Dikarya</taxon>
        <taxon>Basidiomycota</taxon>
        <taxon>Agaricomycotina</taxon>
        <taxon>Agaricomycetes</taxon>
        <taxon>Agaricomycetidae</taxon>
        <taxon>Agaricales</taxon>
        <taxon>Agaricineae</taxon>
        <taxon>Hydnangiaceae</taxon>
        <taxon>Laccaria</taxon>
    </lineage>
</organism>
<sequence>MFANSARNALKKRPQNLQPFRFQGCLFSKRANRPLTTKVQHLIYASVDDKALVTLFDQPRSTLRSPFATTGLFGHPSLTHPRALISLADATVVRAQLLTDRILRARESRTELLRVVKNLDRLSDMLCGVIDLAELVRNAHPDRSWVDAANRAYETLCEFMNVLNTHVGLYEVLKAVLSDPSIVKTLGPEAHQTALIFWRDFEKSAIDLPAEQRKKFVSLSSDILVLGRQFLEGANAPRPPASIKPSQLSGLKDKGMGVRLQLQAQFTQRDLQVYPGSLQAQMIMRSAPEEEPRRQVYLAANSSTPQQIEVLEKLLRTRAELARLVGRDSFAHMTLDDKMAKTPDNVWNFLDALMDHTKPFARRALHTLSERKQLHHGTSSLPIIQAWDRDFYCPPDPPAPPIPLPPLTLGTVFMGLSRLFQHMYGISLRPADSASGEVWHTDVQKLEVVDQDQGIIGWIYADLFARRGKASGAAHYTVRCSRRTDDDDESSDGTVEGAELLIYESQEFEAVKRHRLPNQDGIYQLPLVVLLCEFARPTPSKGPTVLEWHEVLTLFHEMGHAMHSMIGRTEYQNVAGTRCATDFVEFPSILMEHFLNSPTVLSLFDVDGTSTVRHIGNHHNDPCHFIDTYSQILLAAVDQVYHSPAVLDPTFDSTAELAKVHNTRGLIPYVPGTSFQTQFGHLYGYGATYYSYLLDRAIASRVWRNVFLDDPLDRETGEKFKCEVLRFGGGKDPWKMVSALLDVPELSTGDAEAMREIGRWKINSEIGVHGRH</sequence>
<protein>
    <recommendedName>
        <fullName>Mitochondrial intermediate peptidase</fullName>
        <shortName>MIP</shortName>
        <ecNumber>3.4.24.59</ecNumber>
    </recommendedName>
    <alternativeName>
        <fullName>Octapeptidyl aminopeptidase</fullName>
    </alternativeName>
</protein>
<accession>B0CRC2</accession>
<evidence type="ECO:0000250" key="1"/>
<evidence type="ECO:0000255" key="2"/>
<evidence type="ECO:0000255" key="3">
    <source>
        <dbReference type="PROSITE-ProRule" id="PRU10095"/>
    </source>
</evidence>
<evidence type="ECO:0000305" key="4"/>
<reference key="1">
    <citation type="journal article" date="2008" name="Nature">
        <title>The genome of Laccaria bicolor provides insights into mycorrhizal symbiosis.</title>
        <authorList>
            <person name="Martin F."/>
            <person name="Aerts A."/>
            <person name="Ahren D."/>
            <person name="Brun A."/>
            <person name="Danchin E.G.J."/>
            <person name="Duchaussoy F."/>
            <person name="Gibon J."/>
            <person name="Kohler A."/>
            <person name="Lindquist E."/>
            <person name="Pereda V."/>
            <person name="Salamov A."/>
            <person name="Shapiro H.J."/>
            <person name="Wuyts J."/>
            <person name="Blaudez D."/>
            <person name="Buee M."/>
            <person name="Brokstein P."/>
            <person name="Canbaeck B."/>
            <person name="Cohen D."/>
            <person name="Courty P.E."/>
            <person name="Coutinho P.M."/>
            <person name="Delaruelle C."/>
            <person name="Detter J.C."/>
            <person name="Deveau A."/>
            <person name="DiFazio S."/>
            <person name="Duplessis S."/>
            <person name="Fraissinet-Tachet L."/>
            <person name="Lucic E."/>
            <person name="Frey-Klett P."/>
            <person name="Fourrey C."/>
            <person name="Feussner I."/>
            <person name="Gay G."/>
            <person name="Grimwood J."/>
            <person name="Hoegger P.J."/>
            <person name="Jain P."/>
            <person name="Kilaru S."/>
            <person name="Labbe J."/>
            <person name="Lin Y.C."/>
            <person name="Legue V."/>
            <person name="Le Tacon F."/>
            <person name="Marmeisse R."/>
            <person name="Melayah D."/>
            <person name="Montanini B."/>
            <person name="Muratet M."/>
            <person name="Nehls U."/>
            <person name="Niculita-Hirzel H."/>
            <person name="Oudot-Le Secq M.P."/>
            <person name="Peter M."/>
            <person name="Quesneville H."/>
            <person name="Rajashekar B."/>
            <person name="Reich M."/>
            <person name="Rouhier N."/>
            <person name="Schmutz J."/>
            <person name="Yin T."/>
            <person name="Chalot M."/>
            <person name="Henrissat B."/>
            <person name="Kuees U."/>
            <person name="Lucas S."/>
            <person name="Van de Peer Y."/>
            <person name="Podila G.K."/>
            <person name="Polle A."/>
            <person name="Pukkila P.J."/>
            <person name="Richardson P.M."/>
            <person name="Rouze P."/>
            <person name="Sanders I.R."/>
            <person name="Stajich J.E."/>
            <person name="Tunlid A."/>
            <person name="Tuskan G."/>
            <person name="Grigoriev I.V."/>
        </authorList>
    </citation>
    <scope>NUCLEOTIDE SEQUENCE [LARGE SCALE GENOMIC DNA]</scope>
    <source>
        <strain>S238N-H82 / ATCC MYA-4686</strain>
    </source>
</reference>
<feature type="transit peptide" description="Mitochondrion" evidence="2">
    <location>
        <begin position="1"/>
        <end position="42"/>
    </location>
</feature>
<feature type="chain" id="PRO_0000338585" description="Mitochondrial intermediate peptidase">
    <location>
        <begin position="43"/>
        <end position="772"/>
    </location>
</feature>
<feature type="active site" evidence="3">
    <location>
        <position position="557"/>
    </location>
</feature>
<feature type="binding site" evidence="3">
    <location>
        <position position="556"/>
    </location>
    <ligand>
        <name>Zn(2+)</name>
        <dbReference type="ChEBI" id="CHEBI:29105"/>
        <note>catalytic</note>
    </ligand>
</feature>
<feature type="binding site" evidence="3">
    <location>
        <position position="560"/>
    </location>
    <ligand>
        <name>Zn(2+)</name>
        <dbReference type="ChEBI" id="CHEBI:29105"/>
        <note>catalytic</note>
    </ligand>
</feature>
<feature type="binding site" evidence="3">
    <location>
        <position position="563"/>
    </location>
    <ligand>
        <name>Zn(2+)</name>
        <dbReference type="ChEBI" id="CHEBI:29105"/>
        <note>catalytic</note>
    </ligand>
</feature>
<proteinExistence type="inferred from homology"/>
<keyword id="KW-0378">Hydrolase</keyword>
<keyword id="KW-0479">Metal-binding</keyword>
<keyword id="KW-0482">Metalloprotease</keyword>
<keyword id="KW-0496">Mitochondrion</keyword>
<keyword id="KW-0645">Protease</keyword>
<keyword id="KW-1185">Reference proteome</keyword>
<keyword id="KW-0809">Transit peptide</keyword>
<keyword id="KW-0862">Zinc</keyword>
<name>PMIP_LACBS</name>